<evidence type="ECO:0000250" key="1">
    <source>
        <dbReference type="UniProtKB" id="P32523"/>
    </source>
</evidence>
<evidence type="ECO:0000250" key="2">
    <source>
        <dbReference type="UniProtKB" id="Q9UMS4"/>
    </source>
</evidence>
<evidence type="ECO:0000269" key="3">
    <source>
    </source>
</evidence>
<evidence type="ECO:0000269" key="4">
    <source>
    </source>
</evidence>
<evidence type="ECO:0000305" key="5"/>
<evidence type="ECO:0007829" key="6">
    <source>
        <dbReference type="PDB" id="9ESH"/>
    </source>
</evidence>
<evidence type="ECO:0007829" key="7">
    <source>
        <dbReference type="PDB" id="9ESI"/>
    </source>
</evidence>
<protein>
    <recommendedName>
        <fullName evidence="5">Pre-mRNA-processing factor 19</fullName>
        <ecNumber evidence="1">2.3.2.27</ecNumber>
    </recommendedName>
    <alternativeName>
        <fullName>Complexed with cdc5 protein 8</fullName>
    </alternativeName>
    <alternativeName>
        <fullName evidence="5">RING-type E3 ubiquitin transferase PRP19</fullName>
    </alternativeName>
</protein>
<dbReference type="EC" id="2.3.2.27" evidence="1"/>
<dbReference type="EMBL" id="AF254351">
    <property type="protein sequence ID" value="AAF67750.1"/>
    <property type="molecule type" value="Genomic_DNA"/>
</dbReference>
<dbReference type="EMBL" id="CU329670">
    <property type="protein sequence ID" value="CAB10135.1"/>
    <property type="molecule type" value="Genomic_DNA"/>
</dbReference>
<dbReference type="PIR" id="T38481">
    <property type="entry name" value="T38481"/>
</dbReference>
<dbReference type="RefSeq" id="NP_594874.1">
    <property type="nucleotide sequence ID" value="NM_001020303.2"/>
</dbReference>
<dbReference type="PDB" id="3JB9">
    <property type="method" value="EM"/>
    <property type="resolution" value="3.60 A"/>
    <property type="chains" value="S/T/U/V=1-488"/>
</dbReference>
<dbReference type="PDB" id="9ESH">
    <property type="method" value="EM"/>
    <property type="resolution" value="3.20 A"/>
    <property type="chains" value="S/T/U/V=1-488"/>
</dbReference>
<dbReference type="PDB" id="9ESI">
    <property type="method" value="EM"/>
    <property type="resolution" value="3.10 A"/>
    <property type="chains" value="S/T/U/V=1-488"/>
</dbReference>
<dbReference type="PDBsum" id="3JB9"/>
<dbReference type="PDBsum" id="9ESH"/>
<dbReference type="PDBsum" id="9ESI"/>
<dbReference type="EMDB" id="EMD-19941"/>
<dbReference type="EMDB" id="EMD-19942"/>
<dbReference type="SMR" id="O14011"/>
<dbReference type="BioGRID" id="278726">
    <property type="interactions" value="90"/>
</dbReference>
<dbReference type="DIP" id="DIP-34861N"/>
<dbReference type="FunCoup" id="O14011">
    <property type="interactions" value="750"/>
</dbReference>
<dbReference type="IntAct" id="O14011">
    <property type="interactions" value="51"/>
</dbReference>
<dbReference type="STRING" id="284812.O14011"/>
<dbReference type="iPTMnet" id="O14011"/>
<dbReference type="PaxDb" id="4896-SPAC29A4.08c.1"/>
<dbReference type="EnsemblFungi" id="SPAC29A4.08c.1">
    <property type="protein sequence ID" value="SPAC29A4.08c.1:pep"/>
    <property type="gene ID" value="SPAC29A4.08c"/>
</dbReference>
<dbReference type="GeneID" id="2542256"/>
<dbReference type="KEGG" id="spo:2542256"/>
<dbReference type="PomBase" id="SPAC29A4.08c">
    <property type="gene designation" value="prp19"/>
</dbReference>
<dbReference type="VEuPathDB" id="FungiDB:SPAC29A4.08c"/>
<dbReference type="eggNOG" id="KOG0289">
    <property type="taxonomic scope" value="Eukaryota"/>
</dbReference>
<dbReference type="HOGENOM" id="CLU_023894_0_1_1"/>
<dbReference type="InParanoid" id="O14011"/>
<dbReference type="OMA" id="SLDQHWA"/>
<dbReference type="PhylomeDB" id="O14011"/>
<dbReference type="Reactome" id="R-SPO-6781823">
    <property type="pathway name" value="Formation of TC-NER Pre-Incision Complex"/>
</dbReference>
<dbReference type="Reactome" id="R-SPO-6782135">
    <property type="pathway name" value="Dual incision in TC-NER"/>
</dbReference>
<dbReference type="Reactome" id="R-SPO-6782210">
    <property type="pathway name" value="Gap-filling DNA repair synthesis and ligation in TC-NER"/>
</dbReference>
<dbReference type="Reactome" id="R-SPO-72163">
    <property type="pathway name" value="mRNA Splicing - Major Pathway"/>
</dbReference>
<dbReference type="UniPathway" id="UPA00143"/>
<dbReference type="PRO" id="PR:O14011"/>
<dbReference type="Proteomes" id="UP000002485">
    <property type="component" value="Chromosome I"/>
</dbReference>
<dbReference type="GO" id="GO:0005737">
    <property type="term" value="C:cytoplasm"/>
    <property type="evidence" value="ECO:0007005"/>
    <property type="project" value="PomBase"/>
</dbReference>
<dbReference type="GO" id="GO:0005829">
    <property type="term" value="C:cytosol"/>
    <property type="evidence" value="ECO:0007005"/>
    <property type="project" value="PomBase"/>
</dbReference>
<dbReference type="GO" id="GO:0005635">
    <property type="term" value="C:nuclear envelope"/>
    <property type="evidence" value="ECO:0007005"/>
    <property type="project" value="PomBase"/>
</dbReference>
<dbReference type="GO" id="GO:0005634">
    <property type="term" value="C:nucleus"/>
    <property type="evidence" value="ECO:0007005"/>
    <property type="project" value="PomBase"/>
</dbReference>
<dbReference type="GO" id="GO:0071014">
    <property type="term" value="C:post-mRNA release spliceosomal complex"/>
    <property type="evidence" value="ECO:0000314"/>
    <property type="project" value="PomBase"/>
</dbReference>
<dbReference type="GO" id="GO:0000974">
    <property type="term" value="C:Prp19 complex"/>
    <property type="evidence" value="ECO:0000314"/>
    <property type="project" value="PomBase"/>
</dbReference>
<dbReference type="GO" id="GO:0005681">
    <property type="term" value="C:spliceosomal complex"/>
    <property type="evidence" value="ECO:0000314"/>
    <property type="project" value="PomBase"/>
</dbReference>
<dbReference type="GO" id="GO:0071006">
    <property type="term" value="C:U2-type catalytic step 1 spliceosome"/>
    <property type="evidence" value="ECO:0000318"/>
    <property type="project" value="GO_Central"/>
</dbReference>
<dbReference type="GO" id="GO:0061630">
    <property type="term" value="F:ubiquitin protein ligase activity"/>
    <property type="evidence" value="ECO:0000250"/>
    <property type="project" value="UniProtKB"/>
</dbReference>
<dbReference type="GO" id="GO:0004842">
    <property type="term" value="F:ubiquitin-protein transferase activity"/>
    <property type="evidence" value="ECO:0000318"/>
    <property type="project" value="GO_Central"/>
</dbReference>
<dbReference type="GO" id="GO:0006281">
    <property type="term" value="P:DNA repair"/>
    <property type="evidence" value="ECO:0007669"/>
    <property type="project" value="UniProtKB-KW"/>
</dbReference>
<dbReference type="GO" id="GO:0045292">
    <property type="term" value="P:mRNA cis splicing, via spliceosome"/>
    <property type="evidence" value="ECO:0000269"/>
    <property type="project" value="PomBase"/>
</dbReference>
<dbReference type="GO" id="GO:0000398">
    <property type="term" value="P:mRNA splicing, via spliceosome"/>
    <property type="evidence" value="ECO:0000318"/>
    <property type="project" value="GO_Central"/>
</dbReference>
<dbReference type="GO" id="GO:0070534">
    <property type="term" value="P:protein K63-linked ubiquitination"/>
    <property type="evidence" value="ECO:0000250"/>
    <property type="project" value="UniProtKB"/>
</dbReference>
<dbReference type="CDD" id="cd16656">
    <property type="entry name" value="RING-Ubox_PRP19"/>
    <property type="match status" value="1"/>
</dbReference>
<dbReference type="FunFam" id="3.30.40.10:FF:000027">
    <property type="entry name" value="Pre-mRNA-processing factor 19, putative"/>
    <property type="match status" value="1"/>
</dbReference>
<dbReference type="Gene3D" id="2.130.10.10">
    <property type="entry name" value="YVTN repeat-like/Quinoprotein amine dehydrogenase"/>
    <property type="match status" value="1"/>
</dbReference>
<dbReference type="Gene3D" id="3.30.40.10">
    <property type="entry name" value="Zinc/RING finger domain, C3HC4 (zinc finger)"/>
    <property type="match status" value="1"/>
</dbReference>
<dbReference type="InterPro" id="IPR024977">
    <property type="entry name" value="Apc4-like_WD40_dom"/>
</dbReference>
<dbReference type="InterPro" id="IPR013915">
    <property type="entry name" value="Pre-mRNA_splic_Prp19_cc"/>
</dbReference>
<dbReference type="InterPro" id="IPR038959">
    <property type="entry name" value="Prp19"/>
</dbReference>
<dbReference type="InterPro" id="IPR055340">
    <property type="entry name" value="RING-Ubox_PRP19"/>
</dbReference>
<dbReference type="InterPro" id="IPR003613">
    <property type="entry name" value="Ubox_domain"/>
</dbReference>
<dbReference type="InterPro" id="IPR015943">
    <property type="entry name" value="WD40/YVTN_repeat-like_dom_sf"/>
</dbReference>
<dbReference type="InterPro" id="IPR019775">
    <property type="entry name" value="WD40_repeat_CS"/>
</dbReference>
<dbReference type="InterPro" id="IPR036322">
    <property type="entry name" value="WD40_repeat_dom_sf"/>
</dbReference>
<dbReference type="InterPro" id="IPR001680">
    <property type="entry name" value="WD40_rpt"/>
</dbReference>
<dbReference type="InterPro" id="IPR013083">
    <property type="entry name" value="Znf_RING/FYVE/PHD"/>
</dbReference>
<dbReference type="PANTHER" id="PTHR43995">
    <property type="entry name" value="PRE-MRNA-PROCESSING FACTOR 19"/>
    <property type="match status" value="1"/>
</dbReference>
<dbReference type="PANTHER" id="PTHR43995:SF1">
    <property type="entry name" value="PRE-MRNA-PROCESSING FACTOR 19"/>
    <property type="match status" value="1"/>
</dbReference>
<dbReference type="Pfam" id="PF12894">
    <property type="entry name" value="ANAPC4_WD40"/>
    <property type="match status" value="1"/>
</dbReference>
<dbReference type="Pfam" id="PF08606">
    <property type="entry name" value="Prp19"/>
    <property type="match status" value="1"/>
</dbReference>
<dbReference type="SMART" id="SM00504">
    <property type="entry name" value="Ubox"/>
    <property type="match status" value="1"/>
</dbReference>
<dbReference type="SMART" id="SM00320">
    <property type="entry name" value="WD40"/>
    <property type="match status" value="4"/>
</dbReference>
<dbReference type="SUPFAM" id="SSF57850">
    <property type="entry name" value="RING/U-box"/>
    <property type="match status" value="1"/>
</dbReference>
<dbReference type="SUPFAM" id="SSF50978">
    <property type="entry name" value="WD40 repeat-like"/>
    <property type="match status" value="1"/>
</dbReference>
<dbReference type="PROSITE" id="PS51698">
    <property type="entry name" value="U_BOX"/>
    <property type="match status" value="1"/>
</dbReference>
<dbReference type="PROSITE" id="PS00678">
    <property type="entry name" value="WD_REPEATS_1"/>
    <property type="match status" value="1"/>
</dbReference>
<dbReference type="PROSITE" id="PS50082">
    <property type="entry name" value="WD_REPEATS_2"/>
    <property type="match status" value="1"/>
</dbReference>
<dbReference type="PROSITE" id="PS50294">
    <property type="entry name" value="WD_REPEATS_REGION"/>
    <property type="match status" value="1"/>
</dbReference>
<reference key="1">
    <citation type="journal article" date="1999" name="Mol. Cell. Biol.">
        <title>Myb-related fission yeast cdc5p is a component of a 40S snRNP-containing complex and is essential for pre-mRNA splicing.</title>
        <authorList>
            <person name="McDonald W.H."/>
            <person name="Ohi R."/>
            <person name="Smelkova N."/>
            <person name="Frendewey D."/>
            <person name="Gould K.L."/>
        </authorList>
    </citation>
    <scope>NUCLEOTIDE SEQUENCE [GENOMIC DNA]</scope>
    <scope>PROTEIN SEQUENCE OF 99-113</scope>
</reference>
<reference key="2">
    <citation type="journal article" date="2002" name="Nature">
        <title>The genome sequence of Schizosaccharomyces pombe.</title>
        <authorList>
            <person name="Wood V."/>
            <person name="Gwilliam R."/>
            <person name="Rajandream M.A."/>
            <person name="Lyne M.H."/>
            <person name="Lyne R."/>
            <person name="Stewart A."/>
            <person name="Sgouros J.G."/>
            <person name="Peat N."/>
            <person name="Hayles J."/>
            <person name="Baker S.G."/>
            <person name="Basham D."/>
            <person name="Bowman S."/>
            <person name="Brooks K."/>
            <person name="Brown D."/>
            <person name="Brown S."/>
            <person name="Chillingworth T."/>
            <person name="Churcher C.M."/>
            <person name="Collins M."/>
            <person name="Connor R."/>
            <person name="Cronin A."/>
            <person name="Davis P."/>
            <person name="Feltwell T."/>
            <person name="Fraser A."/>
            <person name="Gentles S."/>
            <person name="Goble A."/>
            <person name="Hamlin N."/>
            <person name="Harris D.E."/>
            <person name="Hidalgo J."/>
            <person name="Hodgson G."/>
            <person name="Holroyd S."/>
            <person name="Hornsby T."/>
            <person name="Howarth S."/>
            <person name="Huckle E.J."/>
            <person name="Hunt S."/>
            <person name="Jagels K."/>
            <person name="James K.D."/>
            <person name="Jones L."/>
            <person name="Jones M."/>
            <person name="Leather S."/>
            <person name="McDonald S."/>
            <person name="McLean J."/>
            <person name="Mooney P."/>
            <person name="Moule S."/>
            <person name="Mungall K.L."/>
            <person name="Murphy L.D."/>
            <person name="Niblett D."/>
            <person name="Odell C."/>
            <person name="Oliver K."/>
            <person name="O'Neil S."/>
            <person name="Pearson D."/>
            <person name="Quail M.A."/>
            <person name="Rabbinowitsch E."/>
            <person name="Rutherford K.M."/>
            <person name="Rutter S."/>
            <person name="Saunders D."/>
            <person name="Seeger K."/>
            <person name="Sharp S."/>
            <person name="Skelton J."/>
            <person name="Simmonds M.N."/>
            <person name="Squares R."/>
            <person name="Squares S."/>
            <person name="Stevens K."/>
            <person name="Taylor K."/>
            <person name="Taylor R.G."/>
            <person name="Tivey A."/>
            <person name="Walsh S.V."/>
            <person name="Warren T."/>
            <person name="Whitehead S."/>
            <person name="Woodward J.R."/>
            <person name="Volckaert G."/>
            <person name="Aert R."/>
            <person name="Robben J."/>
            <person name="Grymonprez B."/>
            <person name="Weltjens I."/>
            <person name="Vanstreels E."/>
            <person name="Rieger M."/>
            <person name="Schaefer M."/>
            <person name="Mueller-Auer S."/>
            <person name="Gabel C."/>
            <person name="Fuchs M."/>
            <person name="Duesterhoeft A."/>
            <person name="Fritzc C."/>
            <person name="Holzer E."/>
            <person name="Moestl D."/>
            <person name="Hilbert H."/>
            <person name="Borzym K."/>
            <person name="Langer I."/>
            <person name="Beck A."/>
            <person name="Lehrach H."/>
            <person name="Reinhardt R."/>
            <person name="Pohl T.M."/>
            <person name="Eger P."/>
            <person name="Zimmermann W."/>
            <person name="Wedler H."/>
            <person name="Wambutt R."/>
            <person name="Purnelle B."/>
            <person name="Goffeau A."/>
            <person name="Cadieu E."/>
            <person name="Dreano S."/>
            <person name="Gloux S."/>
            <person name="Lelaure V."/>
            <person name="Mottier S."/>
            <person name="Galibert F."/>
            <person name="Aves S.J."/>
            <person name="Xiang Z."/>
            <person name="Hunt C."/>
            <person name="Moore K."/>
            <person name="Hurst S.M."/>
            <person name="Lucas M."/>
            <person name="Rochet M."/>
            <person name="Gaillardin C."/>
            <person name="Tallada V.A."/>
            <person name="Garzon A."/>
            <person name="Thode G."/>
            <person name="Daga R.R."/>
            <person name="Cruzado L."/>
            <person name="Jimenez J."/>
            <person name="Sanchez M."/>
            <person name="del Rey F."/>
            <person name="Benito J."/>
            <person name="Dominguez A."/>
            <person name="Revuelta J.L."/>
            <person name="Moreno S."/>
            <person name="Armstrong J."/>
            <person name="Forsburg S.L."/>
            <person name="Cerutti L."/>
            <person name="Lowe T."/>
            <person name="McCombie W.R."/>
            <person name="Paulsen I."/>
            <person name="Potashkin J."/>
            <person name="Shpakovski G.V."/>
            <person name="Ussery D."/>
            <person name="Barrell B.G."/>
            <person name="Nurse P."/>
        </authorList>
    </citation>
    <scope>NUCLEOTIDE SEQUENCE [LARGE SCALE GENOMIC DNA]</scope>
    <source>
        <strain>972 / ATCC 24843</strain>
    </source>
</reference>
<reference key="3">
    <citation type="journal article" date="2002" name="Mol. Cell. Biol.">
        <title>Proteomics analysis reveals stable multiprotein complexes in both fission and budding yeasts containing Myb-related Cdc5p/Cef1p, novel pre-mRNA splicing factors, and snRNAs.</title>
        <authorList>
            <person name="Ohi M.D."/>
            <person name="Link A.J."/>
            <person name="Ren L."/>
            <person name="Jennings J.L."/>
            <person name="McDonald W.H."/>
            <person name="Gould K.L."/>
        </authorList>
    </citation>
    <scope>IDENTIFICATION IN THE CWF COMPLEX</scope>
    <scope>IDENTIFICATION BY MASS SPECTROMETRY</scope>
</reference>
<reference key="4">
    <citation type="journal article" date="2018" name="EMBO J.">
        <title>Sde2 is an intron-specific pre-mRNA splicing regulator activated by ubiquitin-like processing.</title>
        <authorList>
            <person name="Thakran P."/>
            <person name="Pandit P.A."/>
            <person name="Datta S."/>
            <person name="Kolathur K.K."/>
            <person name="Pleiss J.A."/>
            <person name="Mishra S.K."/>
        </authorList>
    </citation>
    <scope>INTERACTION WITH SDE2</scope>
</reference>
<name>PRP19_SCHPO</name>
<proteinExistence type="evidence at protein level"/>
<gene>
    <name type="primary">prp19</name>
    <name type="synonym">cwf8</name>
    <name type="ORF">SPAC29A4.08c</name>
</gene>
<comment type="function">
    <text evidence="1">Probable ubiquitin-protein ligase involved in pre-mRNA splicing (By similarity). May also function in DNA repair (By similarity).</text>
</comment>
<comment type="catalytic activity">
    <reaction evidence="1">
        <text>S-ubiquitinyl-[E2 ubiquitin-conjugating enzyme]-L-cysteine + [acceptor protein]-L-lysine = [E2 ubiquitin-conjugating enzyme]-L-cysteine + N(6)-ubiquitinyl-[acceptor protein]-L-lysine.</text>
        <dbReference type="EC" id="2.3.2.27"/>
    </reaction>
</comment>
<comment type="pathway">
    <text evidence="1">Protein modification; protein ubiquitination.</text>
</comment>
<comment type="subunit">
    <text evidence="1 3 4">Homotetramer (By similarity). Component of the NTC complex (or PRP19-associated complex), composed of at least CEF1, CLF1, ISY1, NTC20, SNT309, SYF1, SYF2, and PRP19 (By similarity). Component of the 40S cdc5-associated complex (or cwf complex), a spliceosome sub-complex reminiscent of a late-stage spliceosome composed of the U2, U5 and U6 snRNAs and at least brr2, cdc5, cwf2/prp3, cwf3/syf1, cwf4/syf3, cwf5/ecm2, spp42/cwf6, cwf7/spf27, cwf8, cwf9, cwf10, cwf11, cwf12, prp45/cwf13, cwf14, cwf15, cwf16, cwf17, cwf18, cwf19, cwf20, cwf21, cwf22, cwf23, cwf24, cwf25, cwf26, cyp7/cwf27, cwf28, cwf29/ist3, lea1, msl1, prp5/cwf1, prp10, prp12/sap130, prp17, prp22, sap61, sap62, sap114, sap145, slu7, smb1, smd1, smd3, smf1, smg1 and syf2 (PubMed:11884590). Interacts with cdc5 (PubMed:11884590). Interacts with sde2 (PubMed:28947618).</text>
</comment>
<comment type="interaction">
    <interactant intactId="EBI-590830">
        <id>O14011</id>
    </interactant>
    <interactant intactId="EBI-4408349">
        <id>Q09685</id>
        <label>dre4</label>
    </interactant>
    <organismsDiffer>false</organismsDiffer>
    <experiments>6</experiments>
</comment>
<comment type="interaction">
    <interactant intactId="EBI-590830">
        <id>O14011</id>
    </interactant>
    <interactant intactId="EBI-538927">
        <id>O43071</id>
        <label>prp17</label>
    </interactant>
    <organismsDiffer>false</organismsDiffer>
    <experiments>5</experiments>
</comment>
<comment type="interaction">
    <interactant intactId="EBI-590830">
        <id>O14011</id>
    </interactant>
    <interactant intactId="EBI-4421067">
        <id>O74517</id>
        <label>saf1</label>
    </interactant>
    <organismsDiffer>false</organismsDiffer>
    <experiments>3</experiments>
</comment>
<comment type="interaction">
    <interactant intactId="EBI-590830">
        <id>O14011</id>
    </interactant>
    <interactant intactId="EBI-4421106">
        <id>Q9P7H6</id>
        <label>SPAC1782.03</label>
    </interactant>
    <organismsDiffer>false</organismsDiffer>
    <experiments>2</experiments>
</comment>
<comment type="interaction">
    <interactant intactId="EBI-590830">
        <id>O14011</id>
    </interactant>
    <interactant intactId="EBI-4420697">
        <id>O14097</id>
        <label>SPAC2F3.14c</label>
    </interactant>
    <organismsDiffer>false</organismsDiffer>
    <experiments>3</experiments>
</comment>
<comment type="subcellular location">
    <subcellularLocation>
        <location evidence="2">Nucleus</location>
    </subcellularLocation>
</comment>
<comment type="similarity">
    <text evidence="5">Belongs to the WD repeat PRP19 family.</text>
</comment>
<keyword id="KW-0002">3D-structure</keyword>
<keyword id="KW-0903">Direct protein sequencing</keyword>
<keyword id="KW-0227">DNA damage</keyword>
<keyword id="KW-0234">DNA repair</keyword>
<keyword id="KW-0507">mRNA processing</keyword>
<keyword id="KW-0508">mRNA splicing</keyword>
<keyword id="KW-0539">Nucleus</keyword>
<keyword id="KW-1185">Reference proteome</keyword>
<keyword id="KW-0677">Repeat</keyword>
<keyword id="KW-0747">Spliceosome</keyword>
<keyword id="KW-0808">Transferase</keyword>
<keyword id="KW-0833">Ubl conjugation pathway</keyword>
<keyword id="KW-0853">WD repeat</keyword>
<sequence>MFCSISGETPKEPVISRVSGNVYEKRLIEQVIRETSKDPVTQQECTLEDLVPVKVPDFVRPRPPSATSLPALLSLFQEEWDSVALEQFELRRNLTETKQELSTALYSLDAALRVISRLTKERDEAREALAKFSDNIGTVSSKTIEVQEVEMGESDDQLKTSLRSTVEKTFQELSSKRKRTKLQPKWATDDAVSQLLQATPSTILENLETESTTSFFPSPENSSFVLCLHKDELLCLDIQSNSTLKIFEGSALACCWLTSSKIAVATADAISIFEFPVSSSGLQSVGEPTSSIPIDEKVNFLQAHPSGEYLLAASNEKCYIFSLKSQVYNITVAQHITSLAVHPDGNLFVAGLENGELRFFETSSGNELTKFGPHSSPVKTLQFGENGYWLVVTTNDDSDIFIWDLRKSELVQKIPLQTKVAAVSLDITSQLLVSSDGETLYVHIYVKSSKSWRCMSQTHVSSISNLVWLNELHQLLFSTSNGAILRLG</sequence>
<feature type="chain" id="PRO_0000050950" description="Pre-mRNA-processing factor 19">
    <location>
        <begin position="1"/>
        <end position="488"/>
    </location>
</feature>
<feature type="domain" description="U-box">
    <location>
        <begin position="1"/>
        <end position="71"/>
    </location>
</feature>
<feature type="repeat" description="WD 1">
    <location>
        <begin position="331"/>
        <end position="370"/>
    </location>
</feature>
<feature type="repeat" description="WD 2">
    <location>
        <begin position="373"/>
        <end position="413"/>
    </location>
</feature>
<feature type="turn" evidence="7">
    <location>
        <begin position="4"/>
        <end position="6"/>
    </location>
</feature>
<feature type="strand" evidence="7">
    <location>
        <begin position="11"/>
        <end position="19"/>
    </location>
</feature>
<feature type="strand" evidence="7">
    <location>
        <begin position="22"/>
        <end position="24"/>
    </location>
</feature>
<feature type="helix" evidence="7">
    <location>
        <begin position="25"/>
        <end position="34"/>
    </location>
</feature>
<feature type="turn" evidence="7">
    <location>
        <begin position="39"/>
        <end position="41"/>
    </location>
</feature>
<feature type="strand" evidence="7">
    <location>
        <begin position="64"/>
        <end position="67"/>
    </location>
</feature>
<feature type="helix" evidence="7">
    <location>
        <begin position="69"/>
        <end position="131"/>
    </location>
</feature>
<feature type="helix" evidence="7">
    <location>
        <begin position="179"/>
        <end position="182"/>
    </location>
</feature>
<feature type="strand" evidence="7">
    <location>
        <begin position="189"/>
        <end position="191"/>
    </location>
</feature>
<feature type="strand" evidence="7">
    <location>
        <begin position="197"/>
        <end position="199"/>
    </location>
</feature>
<feature type="strand" evidence="6">
    <location>
        <begin position="202"/>
        <end position="207"/>
    </location>
</feature>
<feature type="strand" evidence="6">
    <location>
        <begin position="214"/>
        <end position="219"/>
    </location>
</feature>
<feature type="strand" evidence="7">
    <location>
        <begin position="222"/>
        <end position="228"/>
    </location>
</feature>
<feature type="turn" evidence="7">
    <location>
        <begin position="229"/>
        <end position="232"/>
    </location>
</feature>
<feature type="strand" evidence="7">
    <location>
        <begin position="233"/>
        <end position="239"/>
    </location>
</feature>
<feature type="strand" evidence="7">
    <location>
        <begin position="254"/>
        <end position="256"/>
    </location>
</feature>
<feature type="strand" evidence="7">
    <location>
        <begin position="258"/>
        <end position="261"/>
    </location>
</feature>
<feature type="strand" evidence="7">
    <location>
        <begin position="263"/>
        <end position="267"/>
    </location>
</feature>
<feature type="turn" evidence="7">
    <location>
        <begin position="268"/>
        <end position="270"/>
    </location>
</feature>
<feature type="strand" evidence="7">
    <location>
        <begin position="271"/>
        <end position="273"/>
    </location>
</feature>
<feature type="turn" evidence="7">
    <location>
        <begin position="277"/>
        <end position="280"/>
    </location>
</feature>
<feature type="strand" evidence="7">
    <location>
        <begin position="298"/>
        <end position="303"/>
    </location>
</feature>
<feature type="strand" evidence="7">
    <location>
        <begin position="310"/>
        <end position="314"/>
    </location>
</feature>
<feature type="strand" evidence="7">
    <location>
        <begin position="319"/>
        <end position="321"/>
    </location>
</feature>
<feature type="turn" evidence="6">
    <location>
        <begin position="330"/>
        <end position="332"/>
    </location>
</feature>
<feature type="strand" evidence="6">
    <location>
        <begin position="336"/>
        <end position="341"/>
    </location>
</feature>
<feature type="strand" evidence="7">
    <location>
        <begin position="345"/>
        <end position="352"/>
    </location>
</feature>
<feature type="strand" evidence="7">
    <location>
        <begin position="357"/>
        <end position="361"/>
    </location>
</feature>
<feature type="turn" evidence="7">
    <location>
        <begin position="362"/>
        <end position="364"/>
    </location>
</feature>
<feature type="strand" evidence="7">
    <location>
        <begin position="367"/>
        <end position="370"/>
    </location>
</feature>
<feature type="strand" evidence="7">
    <location>
        <begin position="380"/>
        <end position="383"/>
    </location>
</feature>
<feature type="strand" evidence="7">
    <location>
        <begin position="385"/>
        <end position="388"/>
    </location>
</feature>
<feature type="strand" evidence="7">
    <location>
        <begin position="390"/>
        <end position="393"/>
    </location>
</feature>
<feature type="strand" evidence="7">
    <location>
        <begin position="400"/>
        <end position="403"/>
    </location>
</feature>
<feature type="turn" evidence="7">
    <location>
        <begin position="405"/>
        <end position="407"/>
    </location>
</feature>
<feature type="strand" evidence="7">
    <location>
        <begin position="409"/>
        <end position="414"/>
    </location>
</feature>
<feature type="strand" evidence="7">
    <location>
        <begin position="422"/>
        <end position="427"/>
    </location>
</feature>
<feature type="strand" evidence="7">
    <location>
        <begin position="433"/>
        <end position="439"/>
    </location>
</feature>
<feature type="turn" evidence="7">
    <location>
        <begin position="445"/>
        <end position="447"/>
    </location>
</feature>
<feature type="strand" evidence="7">
    <location>
        <begin position="464"/>
        <end position="469"/>
    </location>
</feature>
<feature type="helix" evidence="7">
    <location>
        <begin position="471"/>
        <end position="473"/>
    </location>
</feature>
<feature type="strand" evidence="7">
    <location>
        <begin position="474"/>
        <end position="483"/>
    </location>
</feature>
<feature type="strand" evidence="7">
    <location>
        <begin position="485"/>
        <end position="487"/>
    </location>
</feature>
<organism>
    <name type="scientific">Schizosaccharomyces pombe (strain 972 / ATCC 24843)</name>
    <name type="common">Fission yeast</name>
    <dbReference type="NCBI Taxonomy" id="284812"/>
    <lineage>
        <taxon>Eukaryota</taxon>
        <taxon>Fungi</taxon>
        <taxon>Dikarya</taxon>
        <taxon>Ascomycota</taxon>
        <taxon>Taphrinomycotina</taxon>
        <taxon>Schizosaccharomycetes</taxon>
        <taxon>Schizosaccharomycetales</taxon>
        <taxon>Schizosaccharomycetaceae</taxon>
        <taxon>Schizosaccharomyces</taxon>
    </lineage>
</organism>
<accession>O14011</accession>